<accession>B4TJX8</accession>
<comment type="function">
    <text evidence="1">Attaches a formyl group to the free amino group of methionyl-tRNA(fMet). The formyl group appears to play a dual role in the initiator identity of N-formylmethionyl-tRNA by promoting its recognition by IF2 and preventing the misappropriation of this tRNA by the elongation apparatus.</text>
</comment>
<comment type="catalytic activity">
    <reaction evidence="1">
        <text>L-methionyl-tRNA(fMet) + (6R)-10-formyltetrahydrofolate = N-formyl-L-methionyl-tRNA(fMet) + (6S)-5,6,7,8-tetrahydrofolate + H(+)</text>
        <dbReference type="Rhea" id="RHEA:24380"/>
        <dbReference type="Rhea" id="RHEA-COMP:9952"/>
        <dbReference type="Rhea" id="RHEA-COMP:9953"/>
        <dbReference type="ChEBI" id="CHEBI:15378"/>
        <dbReference type="ChEBI" id="CHEBI:57453"/>
        <dbReference type="ChEBI" id="CHEBI:78530"/>
        <dbReference type="ChEBI" id="CHEBI:78844"/>
        <dbReference type="ChEBI" id="CHEBI:195366"/>
        <dbReference type="EC" id="2.1.2.9"/>
    </reaction>
</comment>
<comment type="similarity">
    <text evidence="1">Belongs to the Fmt family.</text>
</comment>
<evidence type="ECO:0000255" key="1">
    <source>
        <dbReference type="HAMAP-Rule" id="MF_00182"/>
    </source>
</evidence>
<proteinExistence type="inferred from homology"/>
<dbReference type="EC" id="2.1.2.9" evidence="1"/>
<dbReference type="EMBL" id="CP001120">
    <property type="protein sequence ID" value="ACF70436.1"/>
    <property type="molecule type" value="Genomic_DNA"/>
</dbReference>
<dbReference type="RefSeq" id="WP_001285165.1">
    <property type="nucleotide sequence ID" value="NC_011083.1"/>
</dbReference>
<dbReference type="SMR" id="B4TJX8"/>
<dbReference type="KEGG" id="seh:SeHA_C3711"/>
<dbReference type="HOGENOM" id="CLU_033347_1_2_6"/>
<dbReference type="Proteomes" id="UP000001866">
    <property type="component" value="Chromosome"/>
</dbReference>
<dbReference type="GO" id="GO:0005829">
    <property type="term" value="C:cytosol"/>
    <property type="evidence" value="ECO:0007669"/>
    <property type="project" value="TreeGrafter"/>
</dbReference>
<dbReference type="GO" id="GO:0004479">
    <property type="term" value="F:methionyl-tRNA formyltransferase activity"/>
    <property type="evidence" value="ECO:0007669"/>
    <property type="project" value="UniProtKB-UniRule"/>
</dbReference>
<dbReference type="CDD" id="cd08646">
    <property type="entry name" value="FMT_core_Met-tRNA-FMT_N"/>
    <property type="match status" value="1"/>
</dbReference>
<dbReference type="CDD" id="cd08704">
    <property type="entry name" value="Met_tRNA_FMT_C"/>
    <property type="match status" value="1"/>
</dbReference>
<dbReference type="FunFam" id="3.10.25.10:FF:000001">
    <property type="entry name" value="Methionyl-tRNA formyltransferase"/>
    <property type="match status" value="1"/>
</dbReference>
<dbReference type="FunFam" id="3.40.50.170:FF:000003">
    <property type="entry name" value="Methionyl-tRNA formyltransferase"/>
    <property type="match status" value="1"/>
</dbReference>
<dbReference type="Gene3D" id="3.10.25.10">
    <property type="entry name" value="Formyl transferase, C-terminal domain"/>
    <property type="match status" value="1"/>
</dbReference>
<dbReference type="Gene3D" id="3.40.50.170">
    <property type="entry name" value="Formyl transferase, N-terminal domain"/>
    <property type="match status" value="1"/>
</dbReference>
<dbReference type="HAMAP" id="MF_00182">
    <property type="entry name" value="Formyl_trans"/>
    <property type="match status" value="1"/>
</dbReference>
<dbReference type="InterPro" id="IPR005794">
    <property type="entry name" value="Fmt"/>
</dbReference>
<dbReference type="InterPro" id="IPR005793">
    <property type="entry name" value="Formyl_trans_C"/>
</dbReference>
<dbReference type="InterPro" id="IPR037022">
    <property type="entry name" value="Formyl_trans_C_sf"/>
</dbReference>
<dbReference type="InterPro" id="IPR002376">
    <property type="entry name" value="Formyl_transf_N"/>
</dbReference>
<dbReference type="InterPro" id="IPR036477">
    <property type="entry name" value="Formyl_transf_N_sf"/>
</dbReference>
<dbReference type="InterPro" id="IPR011034">
    <property type="entry name" value="Formyl_transferase-like_C_sf"/>
</dbReference>
<dbReference type="InterPro" id="IPR001555">
    <property type="entry name" value="GART_AS"/>
</dbReference>
<dbReference type="InterPro" id="IPR044135">
    <property type="entry name" value="Met-tRNA-FMT_C"/>
</dbReference>
<dbReference type="InterPro" id="IPR041711">
    <property type="entry name" value="Met-tRNA-FMT_N"/>
</dbReference>
<dbReference type="NCBIfam" id="TIGR00460">
    <property type="entry name" value="fmt"/>
    <property type="match status" value="1"/>
</dbReference>
<dbReference type="PANTHER" id="PTHR11138">
    <property type="entry name" value="METHIONYL-TRNA FORMYLTRANSFERASE"/>
    <property type="match status" value="1"/>
</dbReference>
<dbReference type="PANTHER" id="PTHR11138:SF5">
    <property type="entry name" value="METHIONYL-TRNA FORMYLTRANSFERASE, MITOCHONDRIAL"/>
    <property type="match status" value="1"/>
</dbReference>
<dbReference type="Pfam" id="PF02911">
    <property type="entry name" value="Formyl_trans_C"/>
    <property type="match status" value="1"/>
</dbReference>
<dbReference type="Pfam" id="PF00551">
    <property type="entry name" value="Formyl_trans_N"/>
    <property type="match status" value="1"/>
</dbReference>
<dbReference type="SUPFAM" id="SSF50486">
    <property type="entry name" value="FMT C-terminal domain-like"/>
    <property type="match status" value="1"/>
</dbReference>
<dbReference type="SUPFAM" id="SSF53328">
    <property type="entry name" value="Formyltransferase"/>
    <property type="match status" value="1"/>
</dbReference>
<dbReference type="PROSITE" id="PS00373">
    <property type="entry name" value="GART"/>
    <property type="match status" value="1"/>
</dbReference>
<protein>
    <recommendedName>
        <fullName evidence="1">Methionyl-tRNA formyltransferase</fullName>
        <ecNumber evidence="1">2.1.2.9</ecNumber>
    </recommendedName>
</protein>
<feature type="chain" id="PRO_1000098439" description="Methionyl-tRNA formyltransferase">
    <location>
        <begin position="1"/>
        <end position="315"/>
    </location>
</feature>
<feature type="binding site" evidence="1">
    <location>
        <begin position="113"/>
        <end position="116"/>
    </location>
    <ligand>
        <name>(6S)-5,6,7,8-tetrahydrofolate</name>
        <dbReference type="ChEBI" id="CHEBI:57453"/>
    </ligand>
</feature>
<reference key="1">
    <citation type="journal article" date="2011" name="J. Bacteriol.">
        <title>Comparative genomics of 28 Salmonella enterica isolates: evidence for CRISPR-mediated adaptive sublineage evolution.</title>
        <authorList>
            <person name="Fricke W.F."/>
            <person name="Mammel M.K."/>
            <person name="McDermott P.F."/>
            <person name="Tartera C."/>
            <person name="White D.G."/>
            <person name="Leclerc J.E."/>
            <person name="Ravel J."/>
            <person name="Cebula T.A."/>
        </authorList>
    </citation>
    <scope>NUCLEOTIDE SEQUENCE [LARGE SCALE GENOMIC DNA]</scope>
    <source>
        <strain>SL476</strain>
    </source>
</reference>
<name>FMT_SALHS</name>
<sequence length="315" mass="34029">MSDSLRIIFAGTPDFAARHLDALLTSGHNVVGVFTQPDRPAGRGKKLMPSPVKVLAEEKGLPVFQPVSLRPQENQHLVADLHADVMVVVAYGLILPKAVLDMPRLGCINVHGSLLPRWRGAAPIQRSLWAGDAETGVTIMQMDVGLDTGDMLYKLACPITAEDTSGSLYNKLAELGPQGLITTLKQLADGTATPEAQNEALVTHAEKLSKEEARIDWSLSAAQLERCIRAFNPWPMSWLEIDGQPVKVWQASVIEDATQSLPGTILAATKQGIQVATGKGILNLLSLQPAGKKAMSAQDLLNSRREWFIPGNRLA</sequence>
<organism>
    <name type="scientific">Salmonella heidelberg (strain SL476)</name>
    <dbReference type="NCBI Taxonomy" id="454169"/>
    <lineage>
        <taxon>Bacteria</taxon>
        <taxon>Pseudomonadati</taxon>
        <taxon>Pseudomonadota</taxon>
        <taxon>Gammaproteobacteria</taxon>
        <taxon>Enterobacterales</taxon>
        <taxon>Enterobacteriaceae</taxon>
        <taxon>Salmonella</taxon>
    </lineage>
</organism>
<gene>
    <name evidence="1" type="primary">fmt</name>
    <name type="ordered locus">SeHA_C3711</name>
</gene>
<keyword id="KW-0648">Protein biosynthesis</keyword>
<keyword id="KW-0808">Transferase</keyword>